<protein>
    <recommendedName>
        <fullName evidence="6">Gasdermin-like protein rcd-1-2</fullName>
    </recommendedName>
    <alternativeName>
        <fullName evidence="5">Regulator of cell death 1-2</fullName>
    </alternativeName>
</protein>
<gene>
    <name evidence="5" type="primary">rcd-1-2</name>
</gene>
<organism>
    <name type="scientific">Neurospora crassa</name>
    <dbReference type="NCBI Taxonomy" id="5141"/>
    <lineage>
        <taxon>Eukaryota</taxon>
        <taxon>Fungi</taxon>
        <taxon>Dikarya</taxon>
        <taxon>Ascomycota</taxon>
        <taxon>Pezizomycotina</taxon>
        <taxon>Sordariomycetes</taxon>
        <taxon>Sordariomycetidae</taxon>
        <taxon>Sordariales</taxon>
        <taxon>Sordariaceae</taxon>
        <taxon>Neurospora</taxon>
    </lineage>
</organism>
<sequence>MDNEEWFPLKQTHYPPPTIPSMKTGHPTGPISIGHIIPDLRHLDNVINCKGFEPFPPNMDVFTAHYEQCHFGDHLNSEFVVQAKAAAPIKNIVPGVDVTGSAGLHHTNITSDRWEYDSVVEYAVYPTRQYIDRLLESKEVKQYIQKSKKLLGGWCVYMVTGIMVARGGGRNVVSEEKGAGVFGNVGFQVPGIGEXAPEVGWDTKTKTKVNAHHTTDFVCAIRLVKIAKSGLRSSWTMKKVTREF</sequence>
<keyword id="KW-0002">3D-structure</keyword>
<keyword id="KW-1003">Cell membrane</keyword>
<keyword id="KW-0963">Cytoplasm</keyword>
<keyword id="KW-0472">Membrane</keyword>
<keyword id="KW-1210">Necrosis</keyword>
<keyword id="KW-0812">Transmembrane</keyword>
<keyword id="KW-1134">Transmembrane beta strand</keyword>
<feature type="chain" id="PRO_0000455982" description="Gasdermin-like protein rcd-1-2">
    <location>
        <begin position="1"/>
        <end position="244"/>
    </location>
</feature>
<feature type="region of interest" description="Disordered" evidence="2">
    <location>
        <begin position="1"/>
        <end position="22"/>
    </location>
</feature>
<accession>P0DW10</accession>
<dbReference type="PDB" id="8JYY">
    <property type="method" value="X-ray"/>
    <property type="resolution" value="2.65 A"/>
    <property type="chains" value="A/B/C/D/E/F/G/H/I/J=1-244"/>
</dbReference>
<dbReference type="PDB" id="8JYZ">
    <property type="method" value="EM"/>
    <property type="resolution" value="3.63 A"/>
    <property type="chains" value="B/D/F/H/J/L/N/P/R/T/W=1-244"/>
</dbReference>
<dbReference type="PDBsum" id="8JYY"/>
<dbReference type="PDBsum" id="8JYZ"/>
<dbReference type="EMDB" id="EMD-36734"/>
<dbReference type="SMR" id="P0DW10"/>
<dbReference type="GO" id="GO:0005737">
    <property type="term" value="C:cytoplasm"/>
    <property type="evidence" value="ECO:0007669"/>
    <property type="project" value="UniProtKB-SubCell"/>
</dbReference>
<dbReference type="GO" id="GO:0005886">
    <property type="term" value="C:plasma membrane"/>
    <property type="evidence" value="ECO:0000314"/>
    <property type="project" value="UniProtKB"/>
</dbReference>
<dbReference type="GO" id="GO:0046982">
    <property type="term" value="F:protein heterodimerization activity"/>
    <property type="evidence" value="ECO:0000353"/>
    <property type="project" value="UniProtKB"/>
</dbReference>
<dbReference type="GO" id="GO:0022829">
    <property type="term" value="F:wide pore channel activity"/>
    <property type="evidence" value="ECO:0000314"/>
    <property type="project" value="UniProtKB"/>
</dbReference>
<dbReference type="GO" id="GO:0012501">
    <property type="term" value="P:programmed cell death"/>
    <property type="evidence" value="ECO:0007669"/>
    <property type="project" value="UniProtKB-KW"/>
</dbReference>
<comment type="function">
    <text evidence="3 4">Gasdermin-like protein involved in heterokaryon incompatibility, a process that ensures that during spontaneous vegetative cell fusion, only compatible cells from the same colony survive (non-self-recognition) (PubMed:31636083, PubMed:32703806). In N.crassa, the rcd-1 locus exists as 2 incompatible alleles, rcd-1-1 (AC Q7SBA0) and rcd-1-2 (this entry) (PubMed:31636083). During the allorecognition process, forms a heterooligomer with rcd-1-1, thereby forming a functional gasdermin-like complex that binds to membranes and forms pores, triggering cell death (PubMed:32703806). Binds negatively charged phospholipids, such as cardiolipin and phosphatidylserine (PubMed:32703806). Also binds to phosphoinositides, preferentially to phosphatidylinositol-3-phosphate (PtdIns-3-P), PtdIns-5-P and PtdIns-3,5-P2 (PubMed:32703806).</text>
</comment>
<comment type="subunit">
    <text evidence="4">Heterooligomer; the heterooligomer with rcd-1-1 forms a ring-shaped pore complex when inserted in the membrane.</text>
</comment>
<comment type="subcellular location">
    <subcellularLocation>
        <location evidence="4">Cytoplasm</location>
    </subcellularLocation>
    <subcellularLocation>
        <location evidence="4">Cell membrane</location>
        <topology evidence="1">Multi-pass membrane protein</topology>
    </subcellularLocation>
    <text evidence="4">Cytoplasmic in the absence of rcd-1-1 (PubMed:32703806). Forms a gasdermin-like pore that associates with the cell membrane in the presence of rcd-1-1 (PubMed:32703806).</text>
</comment>
<comment type="similarity">
    <text evidence="6">Belongs to the gasdermin family.</text>
</comment>
<evidence type="ECO:0000250" key="1">
    <source>
        <dbReference type="UniProtKB" id="P57764"/>
    </source>
</evidence>
<evidence type="ECO:0000256" key="2">
    <source>
        <dbReference type="SAM" id="MobiDB-lite"/>
    </source>
</evidence>
<evidence type="ECO:0000269" key="3">
    <source>
    </source>
</evidence>
<evidence type="ECO:0000269" key="4">
    <source>
    </source>
</evidence>
<evidence type="ECO:0000303" key="5">
    <source>
    </source>
</evidence>
<evidence type="ECO:0000305" key="6"/>
<reference key="1">
    <citation type="journal article" date="2019" name="Genetics">
        <title>Programmed Cell Death in Neurospora crassa Is Controlled by the Allorecognition Determinant rcd-1.</title>
        <authorList>
            <person name="Daskalov A."/>
            <person name="Gladieux P."/>
            <person name="Heller J."/>
            <person name="Glass N.L."/>
        </authorList>
    </citation>
    <scope>NUCLEOTIDE SEQUENCE [GENOMIC DNA]</scope>
    <scope>FUNCTION</scope>
</reference>
<reference key="2">
    <citation type="journal article" date="2020" name="Proc. Natl. Acad. Sci. U.S.A.">
        <title>Molecular characterization of a fungal gasdermin-like protein.</title>
        <authorList>
            <person name="Daskalov A."/>
            <person name="Mitchell P.S."/>
            <person name="Sandstrom A."/>
            <person name="Vance R.E."/>
            <person name="Glass N.L."/>
        </authorList>
    </citation>
    <scope>FUNCTION</scope>
    <scope>SUBCELLULAR LOCATION</scope>
    <scope>SUBUNIT</scope>
</reference>
<name>RCD12_NEUCS</name>
<proteinExistence type="evidence at protein level"/>